<sequence length="203" mass="22651">MEFWGIEIKPGKPFKVIQKDGFMVHASQVTLGDVEKVKKDETFAVYVKIGDDENGFMIGNLSQKFPQFSIDLYLGHEFEISHNSTSSVYLIGYRTFDAFDELDEEIDSDSELDEYMEQQIAALPQNEINPEEDDESDSDEMGLDEDDDSSDEEDVEAEAPLKVAPPSKKMPNGAFEIAKGGKKNKSSGGKKRCPFPCGPSCKK</sequence>
<reference key="1">
    <citation type="journal article" date="2001" name="Planta">
        <title>Comparative analysis of HD2 type histone deacetylases in higher plants.</title>
        <authorList>
            <person name="Dangl M."/>
            <person name="Brosch G."/>
            <person name="Haas H."/>
            <person name="Loidl P."/>
            <person name="Lusser A."/>
        </authorList>
    </citation>
    <scope>NUCLEOTIDE SEQUENCE [MRNA]</scope>
</reference>
<reference key="2">
    <citation type="journal article" date="1999" name="Nature">
        <title>Sequence and analysis of chromosome 2 of the plant Arabidopsis thaliana.</title>
        <authorList>
            <person name="Lin X."/>
            <person name="Kaul S."/>
            <person name="Rounsley S.D."/>
            <person name="Shea T.P."/>
            <person name="Benito M.-I."/>
            <person name="Town C.D."/>
            <person name="Fujii C.Y."/>
            <person name="Mason T.M."/>
            <person name="Bowman C.L."/>
            <person name="Barnstead M.E."/>
            <person name="Feldblyum T.V."/>
            <person name="Buell C.R."/>
            <person name="Ketchum K.A."/>
            <person name="Lee J.J."/>
            <person name="Ronning C.M."/>
            <person name="Koo H.L."/>
            <person name="Moffat K.S."/>
            <person name="Cronin L.A."/>
            <person name="Shen M."/>
            <person name="Pai G."/>
            <person name="Van Aken S."/>
            <person name="Umayam L."/>
            <person name="Tallon L.J."/>
            <person name="Gill J.E."/>
            <person name="Adams M.D."/>
            <person name="Carrera A.J."/>
            <person name="Creasy T.H."/>
            <person name="Goodman H.M."/>
            <person name="Somerville C.R."/>
            <person name="Copenhaver G.P."/>
            <person name="Preuss D."/>
            <person name="Nierman W.C."/>
            <person name="White O."/>
            <person name="Eisen J.A."/>
            <person name="Salzberg S.L."/>
            <person name="Fraser C.M."/>
            <person name="Venter J.C."/>
        </authorList>
    </citation>
    <scope>NUCLEOTIDE SEQUENCE [LARGE SCALE GENOMIC DNA]</scope>
    <source>
        <strain>cv. Columbia</strain>
    </source>
</reference>
<reference key="3">
    <citation type="journal article" date="2017" name="Plant J.">
        <title>Araport11: a complete reannotation of the Arabidopsis thaliana reference genome.</title>
        <authorList>
            <person name="Cheng C.Y."/>
            <person name="Krishnakumar V."/>
            <person name="Chan A.P."/>
            <person name="Thibaud-Nissen F."/>
            <person name="Schobel S."/>
            <person name="Town C.D."/>
        </authorList>
    </citation>
    <scope>GENOME REANNOTATION</scope>
    <source>
        <strain>cv. Columbia</strain>
    </source>
</reference>
<reference key="4">
    <citation type="journal article" date="2003" name="Science">
        <title>Empirical analysis of transcriptional activity in the Arabidopsis genome.</title>
        <authorList>
            <person name="Yamada K."/>
            <person name="Lim J."/>
            <person name="Dale J.M."/>
            <person name="Chen H."/>
            <person name="Shinn P."/>
            <person name="Palm C.J."/>
            <person name="Southwick A.M."/>
            <person name="Wu H.C."/>
            <person name="Kim C.J."/>
            <person name="Nguyen M."/>
            <person name="Pham P.K."/>
            <person name="Cheuk R.F."/>
            <person name="Karlin-Newmann G."/>
            <person name="Liu S.X."/>
            <person name="Lam B."/>
            <person name="Sakano H."/>
            <person name="Wu T."/>
            <person name="Yu G."/>
            <person name="Miranda M."/>
            <person name="Quach H.L."/>
            <person name="Tripp M."/>
            <person name="Chang C.H."/>
            <person name="Lee J.M."/>
            <person name="Toriumi M.J."/>
            <person name="Chan M.M."/>
            <person name="Tang C.C."/>
            <person name="Onodera C.S."/>
            <person name="Deng J.M."/>
            <person name="Akiyama K."/>
            <person name="Ansari Y."/>
            <person name="Arakawa T."/>
            <person name="Banh J."/>
            <person name="Banno F."/>
            <person name="Bowser L."/>
            <person name="Brooks S.Y."/>
            <person name="Carninci P."/>
            <person name="Chao Q."/>
            <person name="Choy N."/>
            <person name="Enju A."/>
            <person name="Goldsmith A.D."/>
            <person name="Gurjal M."/>
            <person name="Hansen N.F."/>
            <person name="Hayashizaki Y."/>
            <person name="Johnson-Hopson C."/>
            <person name="Hsuan V.W."/>
            <person name="Iida K."/>
            <person name="Karnes M."/>
            <person name="Khan S."/>
            <person name="Koesema E."/>
            <person name="Ishida J."/>
            <person name="Jiang P.X."/>
            <person name="Jones T."/>
            <person name="Kawai J."/>
            <person name="Kamiya A."/>
            <person name="Meyers C."/>
            <person name="Nakajima M."/>
            <person name="Narusaka M."/>
            <person name="Seki M."/>
            <person name="Sakurai T."/>
            <person name="Satou M."/>
            <person name="Tamse R."/>
            <person name="Vaysberg M."/>
            <person name="Wallender E.K."/>
            <person name="Wong C."/>
            <person name="Yamamura Y."/>
            <person name="Yuan S."/>
            <person name="Shinozaki K."/>
            <person name="Davis R.W."/>
            <person name="Theologis A."/>
            <person name="Ecker J.R."/>
        </authorList>
    </citation>
    <scope>NUCLEOTIDE SEQUENCE [LARGE SCALE MRNA]</scope>
    <source>
        <strain>cv. Columbia</strain>
    </source>
</reference>
<reference key="5">
    <citation type="submission" date="2006-07" db="EMBL/GenBank/DDBJ databases">
        <title>Large-scale analysis of RIKEN Arabidopsis full-length (RAFL) cDNAs.</title>
        <authorList>
            <person name="Totoki Y."/>
            <person name="Seki M."/>
            <person name="Ishida J."/>
            <person name="Nakajima M."/>
            <person name="Enju A."/>
            <person name="Kamiya A."/>
            <person name="Narusaka M."/>
            <person name="Shin-i T."/>
            <person name="Nakagawa M."/>
            <person name="Sakamoto N."/>
            <person name="Oishi K."/>
            <person name="Kohara Y."/>
            <person name="Kobayashi M."/>
            <person name="Toyoda A."/>
            <person name="Sakaki Y."/>
            <person name="Sakurai T."/>
            <person name="Iida K."/>
            <person name="Akiyama K."/>
            <person name="Satou M."/>
            <person name="Toyoda T."/>
            <person name="Konagaya A."/>
            <person name="Carninci P."/>
            <person name="Kawai J."/>
            <person name="Hayashizaki Y."/>
            <person name="Shinozaki K."/>
        </authorList>
    </citation>
    <scope>NUCLEOTIDE SEQUENCE [LARGE SCALE MRNA]</scope>
    <source>
        <strain>cv. Columbia</strain>
    </source>
</reference>
<reference key="6">
    <citation type="journal article" date="2002" name="Nucleic Acids Res.">
        <title>Analysis of histone acetyltransferase and histone deacetylase families of Arabidopsis thaliana suggests functional diversification of chromatin modification among multicellular eukaryotes.</title>
        <authorList>
            <person name="Pandey R."/>
            <person name="Mueller A."/>
            <person name="Napoli C.A."/>
            <person name="Selinger D.A."/>
            <person name="Pikaard C.S."/>
            <person name="Richards E.J."/>
            <person name="Bender J."/>
            <person name="Mount D.W."/>
            <person name="Jorgensen R.A."/>
        </authorList>
    </citation>
    <scope>GENE FAMILY</scope>
    <scope>NOMENCLATURE</scope>
</reference>
<reference key="7">
    <citation type="journal article" date="2004" name="Plant J.">
        <title>Expression and function of HD2-type histone deacetylases in Arabidopsis development.</title>
        <authorList>
            <person name="Zhou C."/>
            <person name="Labbe H."/>
            <person name="Sridha S."/>
            <person name="Wang L."/>
            <person name="Tian L."/>
            <person name="Latoszek-Green M."/>
            <person name="Yang Z."/>
            <person name="Brown D."/>
            <person name="Miki B."/>
            <person name="Wu K."/>
        </authorList>
    </citation>
    <scope>TISSUE SPECIFICITY</scope>
</reference>
<reference key="8">
    <citation type="journal article" date="2005" name="Proc. Natl. Acad. Sci. U.S.A.">
        <title>Histone acetylation affects expression of cellular patterning genes in the Arabidopsis root epidermis.</title>
        <authorList>
            <person name="Xu C.-R."/>
            <person name="Liu C."/>
            <person name="Wang Y.-L."/>
            <person name="Li L.-C."/>
            <person name="Chen W.-Q."/>
            <person name="Xu Z.-H."/>
            <person name="Bai S.-N."/>
        </authorList>
    </citation>
    <scope>FUNCTION</scope>
</reference>
<gene>
    <name type="primary">HDT4</name>
    <name type="synonym">HD2D</name>
    <name type="synonym">HDA13</name>
    <name type="ordered locus">At2g27840</name>
    <name type="ORF">F15K20.6</name>
</gene>
<dbReference type="EMBL" id="AF255713">
    <property type="protein sequence ID" value="AAF70198.1"/>
    <property type="molecule type" value="mRNA"/>
</dbReference>
<dbReference type="EMBL" id="AC005824">
    <property type="protein sequence ID" value="AAC73016.2"/>
    <property type="status" value="ALT_SEQ"/>
    <property type="molecule type" value="Genomic_DNA"/>
</dbReference>
<dbReference type="EMBL" id="CP002685">
    <property type="protein sequence ID" value="ANM62648.1"/>
    <property type="molecule type" value="Genomic_DNA"/>
</dbReference>
<dbReference type="EMBL" id="BT006162">
    <property type="protein sequence ID" value="AAP04146.1"/>
    <property type="molecule type" value="mRNA"/>
</dbReference>
<dbReference type="EMBL" id="BT008535">
    <property type="protein sequence ID" value="AAP40362.1"/>
    <property type="molecule type" value="mRNA"/>
</dbReference>
<dbReference type="EMBL" id="AK229619">
    <property type="protein sequence ID" value="BAF01464.1"/>
    <property type="molecule type" value="mRNA"/>
</dbReference>
<dbReference type="PIR" id="F84677">
    <property type="entry name" value="F84677"/>
</dbReference>
<dbReference type="RefSeq" id="NP_565661.2">
    <molecule id="Q9M4T3-1"/>
    <property type="nucleotide sequence ID" value="NM_128344.4"/>
</dbReference>
<dbReference type="RefSeq" id="NP_850109.1">
    <property type="nucleotide sequence ID" value="NM_179778.1"/>
</dbReference>
<dbReference type="PDB" id="7VMH">
    <property type="method" value="X-ray"/>
    <property type="resolution" value="1.85 A"/>
    <property type="chains" value="A/B/C/D/E=1-97"/>
</dbReference>
<dbReference type="PDBsum" id="7VMH"/>
<dbReference type="SMR" id="Q9M4T3"/>
<dbReference type="BioGRID" id="2681">
    <property type="interactions" value="3"/>
</dbReference>
<dbReference type="FunCoup" id="Q9M4T3">
    <property type="interactions" value="97"/>
</dbReference>
<dbReference type="IntAct" id="Q9M4T3">
    <property type="interactions" value="1"/>
</dbReference>
<dbReference type="STRING" id="3702.Q9M4T3"/>
<dbReference type="PaxDb" id="3702-AT2G27840.1"/>
<dbReference type="ProteomicsDB" id="230316">
    <molecule id="Q9M4T3-1"/>
</dbReference>
<dbReference type="EnsemblPlants" id="AT2G27840.3">
    <molecule id="Q9M4T3-1"/>
    <property type="protein sequence ID" value="AT2G27840.3"/>
    <property type="gene ID" value="AT2G27840"/>
</dbReference>
<dbReference type="GeneID" id="817331"/>
<dbReference type="Gramene" id="AT2G27840.3">
    <molecule id="Q9M4T3-1"/>
    <property type="protein sequence ID" value="AT2G27840.3"/>
    <property type="gene ID" value="AT2G27840"/>
</dbReference>
<dbReference type="KEGG" id="ath:AT2G27840"/>
<dbReference type="Araport" id="AT2G27840"/>
<dbReference type="TAIR" id="AT2G27840">
    <property type="gene designation" value="HDT4"/>
</dbReference>
<dbReference type="HOGENOM" id="CLU_1311650_0_0_1"/>
<dbReference type="InParanoid" id="Q9M4T3"/>
<dbReference type="OMA" id="MDMFRSE"/>
<dbReference type="CD-CODE" id="4299E36E">
    <property type="entry name" value="Nucleolus"/>
</dbReference>
<dbReference type="PRO" id="PR:Q9M4T3"/>
<dbReference type="Proteomes" id="UP000006548">
    <property type="component" value="Chromosome 2"/>
</dbReference>
<dbReference type="ExpressionAtlas" id="Q9M4T3">
    <property type="expression patterns" value="baseline and differential"/>
</dbReference>
<dbReference type="GO" id="GO:0005730">
    <property type="term" value="C:nucleolus"/>
    <property type="evidence" value="ECO:0007005"/>
    <property type="project" value="TAIR"/>
</dbReference>
<dbReference type="GO" id="GO:0016787">
    <property type="term" value="F:hydrolase activity"/>
    <property type="evidence" value="ECO:0007669"/>
    <property type="project" value="UniProtKB-KW"/>
</dbReference>
<dbReference type="GO" id="GO:0006325">
    <property type="term" value="P:chromatin organization"/>
    <property type="evidence" value="ECO:0007669"/>
    <property type="project" value="UniProtKB-KW"/>
</dbReference>
<dbReference type="GO" id="GO:0010162">
    <property type="term" value="P:seed dormancy process"/>
    <property type="evidence" value="ECO:0000270"/>
    <property type="project" value="TAIR"/>
</dbReference>
<dbReference type="Gene3D" id="2.60.120.340">
    <property type="entry name" value="Nucleoplasmin core domain"/>
    <property type="match status" value="1"/>
</dbReference>
<dbReference type="InterPro" id="IPR041232">
    <property type="entry name" value="NPL"/>
</dbReference>
<dbReference type="Pfam" id="PF17800">
    <property type="entry name" value="NPL"/>
    <property type="match status" value="1"/>
</dbReference>
<keyword id="KW-0002">3D-structure</keyword>
<keyword id="KW-0025">Alternative splicing</keyword>
<keyword id="KW-0156">Chromatin regulator</keyword>
<keyword id="KW-0217">Developmental protein</keyword>
<keyword id="KW-0378">Hydrolase</keyword>
<keyword id="KW-0539">Nucleus</keyword>
<keyword id="KW-1185">Reference proteome</keyword>
<keyword id="KW-0678">Repressor</keyword>
<keyword id="KW-0804">Transcription</keyword>
<keyword id="KW-0805">Transcription regulation</keyword>
<accession>Q9M4T3</accession>
<accession>Q0WN36</accession>
<accession>Q9ZUY5</accession>
<proteinExistence type="evidence at protein level"/>
<protein>
    <recommendedName>
        <fullName>Histone deacetylase HDT4</fullName>
    </recommendedName>
    <alternativeName>
        <fullName>HD-tuins protein 4</fullName>
    </alternativeName>
    <alternativeName>
        <fullName>Histone deacetylase 2d</fullName>
    </alternativeName>
</protein>
<feature type="chain" id="PRO_0000195207" description="Histone deacetylase HDT4">
    <location>
        <begin position="1"/>
        <end position="203"/>
    </location>
</feature>
<feature type="region of interest" description="Required to repress transcription" evidence="1">
    <location>
        <begin position="2"/>
        <end position="5"/>
    </location>
</feature>
<feature type="region of interest" description="Disordered" evidence="2">
    <location>
        <begin position="121"/>
        <end position="203"/>
    </location>
</feature>
<feature type="compositionally biased region" description="Acidic residues" evidence="2">
    <location>
        <begin position="129"/>
        <end position="157"/>
    </location>
</feature>
<feature type="compositionally biased region" description="Basic residues" evidence="2">
    <location>
        <begin position="180"/>
        <end position="193"/>
    </location>
</feature>
<feature type="strand" evidence="6">
    <location>
        <begin position="2"/>
        <end position="8"/>
    </location>
</feature>
<feature type="strand" evidence="6">
    <location>
        <begin position="14"/>
        <end position="17"/>
    </location>
</feature>
<feature type="strand" evidence="6">
    <location>
        <begin position="23"/>
        <end position="32"/>
    </location>
</feature>
<feature type="helix" evidence="6">
    <location>
        <begin position="34"/>
        <end position="36"/>
    </location>
</feature>
<feature type="strand" evidence="6">
    <location>
        <begin position="43"/>
        <end position="49"/>
    </location>
</feature>
<feature type="strand" evidence="6">
    <location>
        <begin position="56"/>
        <end position="61"/>
    </location>
</feature>
<feature type="strand" evidence="6">
    <location>
        <begin position="63"/>
        <end position="65"/>
    </location>
</feature>
<feature type="strand" evidence="6">
    <location>
        <begin position="67"/>
        <end position="74"/>
    </location>
</feature>
<feature type="strand" evidence="6">
    <location>
        <begin position="76"/>
        <end position="82"/>
    </location>
</feature>
<feature type="strand" evidence="6">
    <location>
        <begin position="88"/>
        <end position="95"/>
    </location>
</feature>
<name>HDT4_ARATH</name>
<organism>
    <name type="scientific">Arabidopsis thaliana</name>
    <name type="common">Mouse-ear cress</name>
    <dbReference type="NCBI Taxonomy" id="3702"/>
    <lineage>
        <taxon>Eukaryota</taxon>
        <taxon>Viridiplantae</taxon>
        <taxon>Streptophyta</taxon>
        <taxon>Embryophyta</taxon>
        <taxon>Tracheophyta</taxon>
        <taxon>Spermatophyta</taxon>
        <taxon>Magnoliopsida</taxon>
        <taxon>eudicotyledons</taxon>
        <taxon>Gunneridae</taxon>
        <taxon>Pentapetalae</taxon>
        <taxon>rosids</taxon>
        <taxon>malvids</taxon>
        <taxon>Brassicales</taxon>
        <taxon>Brassicaceae</taxon>
        <taxon>Camelineae</taxon>
        <taxon>Arabidopsis</taxon>
    </lineage>
</organism>
<evidence type="ECO:0000250" key="1"/>
<evidence type="ECO:0000256" key="2">
    <source>
        <dbReference type="SAM" id="MobiDB-lite"/>
    </source>
</evidence>
<evidence type="ECO:0000269" key="3">
    <source>
    </source>
</evidence>
<evidence type="ECO:0000269" key="4">
    <source>
    </source>
</evidence>
<evidence type="ECO:0000305" key="5"/>
<evidence type="ECO:0007829" key="6">
    <source>
        <dbReference type="PDB" id="7VMH"/>
    </source>
</evidence>
<comment type="function">
    <text evidence="4">Probably mediates the deacetylation of lysine residues lysine residues on the N-terminal part of the core histones (H2A, H2B, H3 and H4). Histone deacetylation gives a tag for epigenetic repression and plays an important role in transcriptional regulation, cell cycle progression and developmental events.</text>
</comment>
<comment type="interaction">
    <interactant intactId="EBI-25518903">
        <id>Q9M4T3</id>
    </interactant>
    <interactant intactId="EBI-4426649">
        <id>Q17TI5</id>
        <label>BRX</label>
    </interactant>
    <organismsDiffer>false</organismsDiffer>
    <experiments>3</experiments>
</comment>
<comment type="subcellular location">
    <subcellularLocation>
        <location evidence="5">Nucleus</location>
        <location evidence="5">Nucleolus</location>
    </subcellularLocation>
</comment>
<comment type="alternative products">
    <event type="alternative splicing"/>
    <isoform>
        <id>Q9M4T3-1</id>
        <name>1</name>
        <sequence type="displayed"/>
    </isoform>
    <text>A number of isoforms are produced. According to EST sequences.</text>
</comment>
<comment type="tissue specificity">
    <text evidence="3">Confined to stems and flowers with young siliques.</text>
</comment>
<comment type="miscellaneous">
    <text>HDT4 is not required for the cellular patterning in the root epidermis.</text>
</comment>
<comment type="similarity">
    <text evidence="5">Belongs to the histone deacetylase HD2 family.</text>
</comment>
<comment type="sequence caution" evidence="5">
    <conflict type="erroneous gene model prediction">
        <sequence resource="EMBL-CDS" id="AAC73016"/>
    </conflict>
</comment>